<keyword id="KW-0028">Amino-acid biosynthesis</keyword>
<keyword id="KW-0100">Branched-chain amino acid biosynthesis</keyword>
<keyword id="KW-0963">Cytoplasm</keyword>
<keyword id="KW-0432">Leucine biosynthesis</keyword>
<keyword id="KW-0460">Magnesium</keyword>
<keyword id="KW-0464">Manganese</keyword>
<keyword id="KW-0479">Metal-binding</keyword>
<keyword id="KW-0520">NAD</keyword>
<keyword id="KW-0560">Oxidoreductase</keyword>
<keyword id="KW-1185">Reference proteome</keyword>
<dbReference type="EC" id="1.1.1.85" evidence="1"/>
<dbReference type="EMBL" id="CP000248">
    <property type="protein sequence ID" value="ABD27098.1"/>
    <property type="status" value="ALT_INIT"/>
    <property type="molecule type" value="Genomic_DNA"/>
</dbReference>
<dbReference type="RefSeq" id="WP_041551207.1">
    <property type="nucleotide sequence ID" value="NC_007794.1"/>
</dbReference>
<dbReference type="SMR" id="Q2G4X5"/>
<dbReference type="STRING" id="279238.Saro_2662"/>
<dbReference type="KEGG" id="nar:Saro_2662"/>
<dbReference type="eggNOG" id="COG0473">
    <property type="taxonomic scope" value="Bacteria"/>
</dbReference>
<dbReference type="HOGENOM" id="CLU_031953_0_3_5"/>
<dbReference type="UniPathway" id="UPA00048">
    <property type="reaction ID" value="UER00072"/>
</dbReference>
<dbReference type="Proteomes" id="UP000009134">
    <property type="component" value="Chromosome"/>
</dbReference>
<dbReference type="GO" id="GO:0005829">
    <property type="term" value="C:cytosol"/>
    <property type="evidence" value="ECO:0007669"/>
    <property type="project" value="TreeGrafter"/>
</dbReference>
<dbReference type="GO" id="GO:0003862">
    <property type="term" value="F:3-isopropylmalate dehydrogenase activity"/>
    <property type="evidence" value="ECO:0007669"/>
    <property type="project" value="UniProtKB-UniRule"/>
</dbReference>
<dbReference type="GO" id="GO:0000287">
    <property type="term" value="F:magnesium ion binding"/>
    <property type="evidence" value="ECO:0007669"/>
    <property type="project" value="InterPro"/>
</dbReference>
<dbReference type="GO" id="GO:0051287">
    <property type="term" value="F:NAD binding"/>
    <property type="evidence" value="ECO:0007669"/>
    <property type="project" value="InterPro"/>
</dbReference>
<dbReference type="GO" id="GO:0009098">
    <property type="term" value="P:L-leucine biosynthetic process"/>
    <property type="evidence" value="ECO:0007669"/>
    <property type="project" value="UniProtKB-UniRule"/>
</dbReference>
<dbReference type="FunFam" id="3.40.718.10:FF:000006">
    <property type="entry name" value="3-isopropylmalate dehydrogenase"/>
    <property type="match status" value="1"/>
</dbReference>
<dbReference type="Gene3D" id="3.40.718.10">
    <property type="entry name" value="Isopropylmalate Dehydrogenase"/>
    <property type="match status" value="1"/>
</dbReference>
<dbReference type="HAMAP" id="MF_01033">
    <property type="entry name" value="LeuB_type1"/>
    <property type="match status" value="1"/>
</dbReference>
<dbReference type="InterPro" id="IPR019818">
    <property type="entry name" value="IsoCit/isopropylmalate_DH_CS"/>
</dbReference>
<dbReference type="InterPro" id="IPR024084">
    <property type="entry name" value="IsoPropMal-DH-like_dom"/>
</dbReference>
<dbReference type="InterPro" id="IPR004429">
    <property type="entry name" value="Isopropylmalate_DH"/>
</dbReference>
<dbReference type="NCBIfam" id="TIGR00169">
    <property type="entry name" value="leuB"/>
    <property type="match status" value="1"/>
</dbReference>
<dbReference type="PANTHER" id="PTHR42979">
    <property type="entry name" value="3-ISOPROPYLMALATE DEHYDROGENASE"/>
    <property type="match status" value="1"/>
</dbReference>
<dbReference type="PANTHER" id="PTHR42979:SF1">
    <property type="entry name" value="3-ISOPROPYLMALATE DEHYDROGENASE"/>
    <property type="match status" value="1"/>
</dbReference>
<dbReference type="Pfam" id="PF00180">
    <property type="entry name" value="Iso_dh"/>
    <property type="match status" value="1"/>
</dbReference>
<dbReference type="SMART" id="SM01329">
    <property type="entry name" value="Iso_dh"/>
    <property type="match status" value="1"/>
</dbReference>
<dbReference type="SUPFAM" id="SSF53659">
    <property type="entry name" value="Isocitrate/Isopropylmalate dehydrogenase-like"/>
    <property type="match status" value="1"/>
</dbReference>
<dbReference type="PROSITE" id="PS00470">
    <property type="entry name" value="IDH_IMDH"/>
    <property type="match status" value="1"/>
</dbReference>
<protein>
    <recommendedName>
        <fullName evidence="1">3-isopropylmalate dehydrogenase</fullName>
        <ecNumber evidence="1">1.1.1.85</ecNumber>
    </recommendedName>
    <alternativeName>
        <fullName evidence="1">3-IPM-DH</fullName>
    </alternativeName>
    <alternativeName>
        <fullName evidence="1">Beta-IPM dehydrogenase</fullName>
        <shortName evidence="1">IMDH</shortName>
    </alternativeName>
</protein>
<organism>
    <name type="scientific">Novosphingobium aromaticivorans (strain ATCC 700278 / DSM 12444 / CCUG 56034 / CIP 105152 / NBRC 16084 / F199)</name>
    <dbReference type="NCBI Taxonomy" id="279238"/>
    <lineage>
        <taxon>Bacteria</taxon>
        <taxon>Pseudomonadati</taxon>
        <taxon>Pseudomonadota</taxon>
        <taxon>Alphaproteobacteria</taxon>
        <taxon>Sphingomonadales</taxon>
        <taxon>Sphingomonadaceae</taxon>
        <taxon>Novosphingobium</taxon>
    </lineage>
</organism>
<name>LEU3_NOVAD</name>
<comment type="function">
    <text evidence="1">Catalyzes the oxidation of 3-carboxy-2-hydroxy-4-methylpentanoate (3-isopropylmalate) to 3-carboxy-4-methyl-2-oxopentanoate. The product decarboxylates to 4-methyl-2 oxopentanoate.</text>
</comment>
<comment type="catalytic activity">
    <reaction evidence="1">
        <text>(2R,3S)-3-isopropylmalate + NAD(+) = 4-methyl-2-oxopentanoate + CO2 + NADH</text>
        <dbReference type="Rhea" id="RHEA:32271"/>
        <dbReference type="ChEBI" id="CHEBI:16526"/>
        <dbReference type="ChEBI" id="CHEBI:17865"/>
        <dbReference type="ChEBI" id="CHEBI:35121"/>
        <dbReference type="ChEBI" id="CHEBI:57540"/>
        <dbReference type="ChEBI" id="CHEBI:57945"/>
        <dbReference type="EC" id="1.1.1.85"/>
    </reaction>
</comment>
<comment type="cofactor">
    <cofactor evidence="1">
        <name>Mg(2+)</name>
        <dbReference type="ChEBI" id="CHEBI:18420"/>
    </cofactor>
    <cofactor evidence="1">
        <name>Mn(2+)</name>
        <dbReference type="ChEBI" id="CHEBI:29035"/>
    </cofactor>
    <text evidence="1">Binds 1 Mg(2+) or Mn(2+) ion per subunit.</text>
</comment>
<comment type="pathway">
    <text evidence="1">Amino-acid biosynthesis; L-leucine biosynthesis; L-leucine from 3-methyl-2-oxobutanoate: step 3/4.</text>
</comment>
<comment type="subunit">
    <text evidence="1">Homodimer.</text>
</comment>
<comment type="subcellular location">
    <subcellularLocation>
        <location evidence="1">Cytoplasm</location>
    </subcellularLocation>
</comment>
<comment type="similarity">
    <text evidence="1">Belongs to the isocitrate and isopropylmalate dehydrogenases family. LeuB type 1 subfamily.</text>
</comment>
<comment type="sequence caution" evidence="2">
    <conflict type="erroneous initiation">
        <sequence resource="EMBL-CDS" id="ABD27098"/>
    </conflict>
</comment>
<accession>Q2G4X5</accession>
<feature type="chain" id="PRO_0000250123" description="3-isopropylmalate dehydrogenase">
    <location>
        <begin position="1"/>
        <end position="352"/>
    </location>
</feature>
<feature type="binding site" evidence="1">
    <location>
        <position position="91"/>
    </location>
    <ligand>
        <name>substrate</name>
    </ligand>
</feature>
<feature type="binding site" evidence="1">
    <location>
        <position position="101"/>
    </location>
    <ligand>
        <name>substrate</name>
    </ligand>
</feature>
<feature type="binding site" evidence="1">
    <location>
        <position position="129"/>
    </location>
    <ligand>
        <name>substrate</name>
    </ligand>
</feature>
<feature type="binding site" evidence="1">
    <location>
        <position position="218"/>
    </location>
    <ligand>
        <name>Mg(2+)</name>
        <dbReference type="ChEBI" id="CHEBI:18420"/>
    </ligand>
</feature>
<feature type="binding site" evidence="1">
    <location>
        <position position="218"/>
    </location>
    <ligand>
        <name>substrate</name>
    </ligand>
</feature>
<feature type="binding site" evidence="1">
    <location>
        <position position="242"/>
    </location>
    <ligand>
        <name>Mg(2+)</name>
        <dbReference type="ChEBI" id="CHEBI:18420"/>
    </ligand>
</feature>
<feature type="binding site" evidence="1">
    <location>
        <position position="246"/>
    </location>
    <ligand>
        <name>Mg(2+)</name>
        <dbReference type="ChEBI" id="CHEBI:18420"/>
    </ligand>
</feature>
<feature type="binding site" evidence="1">
    <location>
        <begin position="281"/>
        <end position="293"/>
    </location>
    <ligand>
        <name>NAD(+)</name>
        <dbReference type="ChEBI" id="CHEBI:57540"/>
    </ligand>
</feature>
<feature type="site" description="Important for catalysis" evidence="1">
    <location>
        <position position="136"/>
    </location>
</feature>
<feature type="site" description="Important for catalysis" evidence="1">
    <location>
        <position position="186"/>
    </location>
</feature>
<gene>
    <name evidence="1" type="primary">leuB</name>
    <name type="ordered locus">Saro_2662</name>
</gene>
<reference key="1">
    <citation type="submission" date="2006-01" db="EMBL/GenBank/DDBJ databases">
        <title>Complete sequence of Novosphingobium aromaticivorans DSM 12444.</title>
        <authorList>
            <consortium name="US DOE Joint Genome Institute"/>
            <person name="Copeland A."/>
            <person name="Lucas S."/>
            <person name="Lapidus A."/>
            <person name="Barry K."/>
            <person name="Detter J.C."/>
            <person name="Glavina T."/>
            <person name="Hammon N."/>
            <person name="Israni S."/>
            <person name="Pitluck S."/>
            <person name="Chain P."/>
            <person name="Malfatti S."/>
            <person name="Shin M."/>
            <person name="Vergez L."/>
            <person name="Schmutz J."/>
            <person name="Larimer F."/>
            <person name="Land M."/>
            <person name="Kyrpides N."/>
            <person name="Ivanova N."/>
            <person name="Fredrickson J."/>
            <person name="Balkwill D."/>
            <person name="Romine M.F."/>
            <person name="Richardson P."/>
        </authorList>
    </citation>
    <scope>NUCLEOTIDE SEQUENCE [LARGE SCALE GENOMIC DNA]</scope>
    <source>
        <strain>ATCC 700278 / DSM 12444 / CCUG 56034 / CIP 105152 / NBRC 16084 / F199</strain>
    </source>
</reference>
<sequence>MKIAVLPGDGIGPEVTREAVRVIEALGLGDIEMKEAPVGGAAYKAYGHPLPPETLEIARLSDGILFGAVGDPDCDSLERHLRPEQAILGLRKALTLFANLRPARVFKGMEDFSALRPEVAGAIDLLIVRELNGDVYFGEKGFRTAANGDREGYDVMSYSESEVRRIAHVAFRAAMGRKKRLCSVDKANVLETSQLWRDVMLEVAKDYPEVALEHMYVDNAAMQLVRAPGNFDVVVTGNLFGDILSDQASMCVGSIGLLASASLGERETEYGTFGLYEPIHGSAPDIAGKGLANPMATILSAAMLLRHSLGLEVAADRIEAAVAKALADGVLGRDLGGTAGTTEIGDAVLARL</sequence>
<evidence type="ECO:0000255" key="1">
    <source>
        <dbReference type="HAMAP-Rule" id="MF_01033"/>
    </source>
</evidence>
<evidence type="ECO:0000305" key="2"/>
<proteinExistence type="inferred from homology"/>